<evidence type="ECO:0000255" key="1">
    <source>
        <dbReference type="HAMAP-Rule" id="MF_00633"/>
    </source>
</evidence>
<sequence length="215" mass="24137">MSKVYDWFEERLEIQAIADDITSKYVPPHVNIFYCLGGITLTCFLVQVATGFAMTFYYRPTVTDAFASVQYIMTEANFGWLIRSVHRWSASMMVLMMILHVFRVYLTGGFKKPRELTWVTGVVLAVLTASFGVTGYSLPWDQIGYWAVKIVTGVPDAIPVIGSPLVELLRGSASVGQSTLTRFYSLHTFVLPLLTAVFMLMHFPMIRKQGISGPL</sequence>
<geneLocation type="chloroplast"/>
<feature type="chain" id="PRO_0000275319" description="Cytochrome b6">
    <location>
        <begin position="1"/>
        <end position="215"/>
    </location>
</feature>
<feature type="transmembrane region" description="Helical" evidence="1">
    <location>
        <begin position="32"/>
        <end position="52"/>
    </location>
</feature>
<feature type="transmembrane region" description="Helical" evidence="1">
    <location>
        <begin position="90"/>
        <end position="110"/>
    </location>
</feature>
<feature type="transmembrane region" description="Helical" evidence="1">
    <location>
        <begin position="116"/>
        <end position="136"/>
    </location>
</feature>
<feature type="transmembrane region" description="Helical" evidence="1">
    <location>
        <begin position="186"/>
        <end position="206"/>
    </location>
</feature>
<feature type="binding site" description="covalent" evidence="1">
    <location>
        <position position="35"/>
    </location>
    <ligand>
        <name>heme c</name>
        <dbReference type="ChEBI" id="CHEBI:61717"/>
    </ligand>
</feature>
<feature type="binding site" description="axial binding residue" evidence="1">
    <location>
        <position position="86"/>
    </location>
    <ligand>
        <name>heme b</name>
        <dbReference type="ChEBI" id="CHEBI:60344"/>
        <label>2</label>
    </ligand>
    <ligandPart>
        <name>Fe</name>
        <dbReference type="ChEBI" id="CHEBI:18248"/>
    </ligandPart>
</feature>
<feature type="binding site" description="axial binding residue" evidence="1">
    <location>
        <position position="100"/>
    </location>
    <ligand>
        <name>heme b</name>
        <dbReference type="ChEBI" id="CHEBI:60344"/>
        <label>1</label>
    </ligand>
    <ligandPart>
        <name>Fe</name>
        <dbReference type="ChEBI" id="CHEBI:18248"/>
    </ligandPart>
</feature>
<feature type="binding site" description="axial binding residue" evidence="1">
    <location>
        <position position="187"/>
    </location>
    <ligand>
        <name>heme b</name>
        <dbReference type="ChEBI" id="CHEBI:60344"/>
        <label>2</label>
    </ligand>
    <ligandPart>
        <name>Fe</name>
        <dbReference type="ChEBI" id="CHEBI:18248"/>
    </ligandPart>
</feature>
<feature type="binding site" description="axial binding residue" evidence="1">
    <location>
        <position position="202"/>
    </location>
    <ligand>
        <name>heme b</name>
        <dbReference type="ChEBI" id="CHEBI:60344"/>
        <label>1</label>
    </ligand>
    <ligandPart>
        <name>Fe</name>
        <dbReference type="ChEBI" id="CHEBI:18248"/>
    </ligandPart>
</feature>
<proteinExistence type="inferred from homology"/>
<protein>
    <recommendedName>
        <fullName evidence="1">Cytochrome b6</fullName>
    </recommendedName>
</protein>
<reference key="1">
    <citation type="submission" date="2006-01" db="EMBL/GenBank/DDBJ databases">
        <title>A comparison of the first two published chloroplast genomes in Asteraceae: Lactuca and Helianthus.</title>
        <authorList>
            <person name="Timme R.E."/>
            <person name="Kuehl J.V."/>
            <person name="Boore J.L."/>
            <person name="Jansen R.K."/>
        </authorList>
    </citation>
    <scope>NUCLEOTIDE SEQUENCE [LARGE SCALE GENOMIC DNA]</scope>
    <source>
        <strain>cv. HA383</strain>
    </source>
</reference>
<keyword id="KW-0150">Chloroplast</keyword>
<keyword id="KW-0249">Electron transport</keyword>
<keyword id="KW-0349">Heme</keyword>
<keyword id="KW-0408">Iron</keyword>
<keyword id="KW-0472">Membrane</keyword>
<keyword id="KW-0479">Metal-binding</keyword>
<keyword id="KW-0602">Photosynthesis</keyword>
<keyword id="KW-0934">Plastid</keyword>
<keyword id="KW-0793">Thylakoid</keyword>
<keyword id="KW-0812">Transmembrane</keyword>
<keyword id="KW-1133">Transmembrane helix</keyword>
<keyword id="KW-0813">Transport</keyword>
<dbReference type="EMBL" id="DQ383815">
    <property type="protein sequence ID" value="ABD47175.1"/>
    <property type="molecule type" value="Genomic_DNA"/>
</dbReference>
<dbReference type="RefSeq" id="YP_588147.1">
    <property type="nucleotide sequence ID" value="NC_007977.1"/>
</dbReference>
<dbReference type="SMR" id="Q1KXS9"/>
<dbReference type="GeneID" id="4055689"/>
<dbReference type="KEGG" id="han:4055689"/>
<dbReference type="OrthoDB" id="1663482at2759"/>
<dbReference type="GO" id="GO:0009535">
    <property type="term" value="C:chloroplast thylakoid membrane"/>
    <property type="evidence" value="ECO:0007669"/>
    <property type="project" value="UniProtKB-SubCell"/>
</dbReference>
<dbReference type="GO" id="GO:0045158">
    <property type="term" value="F:electron transporter, transferring electrons within cytochrome b6/f complex of photosystem II activity"/>
    <property type="evidence" value="ECO:0007669"/>
    <property type="project" value="UniProtKB-UniRule"/>
</dbReference>
<dbReference type="GO" id="GO:0046872">
    <property type="term" value="F:metal ion binding"/>
    <property type="evidence" value="ECO:0007669"/>
    <property type="project" value="UniProtKB-KW"/>
</dbReference>
<dbReference type="GO" id="GO:0016491">
    <property type="term" value="F:oxidoreductase activity"/>
    <property type="evidence" value="ECO:0007669"/>
    <property type="project" value="InterPro"/>
</dbReference>
<dbReference type="GO" id="GO:0015979">
    <property type="term" value="P:photosynthesis"/>
    <property type="evidence" value="ECO:0007669"/>
    <property type="project" value="UniProtKB-UniRule"/>
</dbReference>
<dbReference type="GO" id="GO:0022904">
    <property type="term" value="P:respiratory electron transport chain"/>
    <property type="evidence" value="ECO:0007669"/>
    <property type="project" value="InterPro"/>
</dbReference>
<dbReference type="CDD" id="cd00284">
    <property type="entry name" value="Cytochrome_b_N"/>
    <property type="match status" value="1"/>
</dbReference>
<dbReference type="FunFam" id="1.20.810.10:FF:000001">
    <property type="entry name" value="Cytochrome b6"/>
    <property type="match status" value="1"/>
</dbReference>
<dbReference type="Gene3D" id="1.20.810.10">
    <property type="entry name" value="Cytochrome Bc1 Complex, Chain C"/>
    <property type="match status" value="1"/>
</dbReference>
<dbReference type="HAMAP" id="MF_00633">
    <property type="entry name" value="Cytb6_f_cytb6"/>
    <property type="match status" value="1"/>
</dbReference>
<dbReference type="InterPro" id="IPR005797">
    <property type="entry name" value="Cyt_b/b6_N"/>
</dbReference>
<dbReference type="InterPro" id="IPR023530">
    <property type="entry name" value="Cyt_B6_PetB"/>
</dbReference>
<dbReference type="InterPro" id="IPR027387">
    <property type="entry name" value="Cytb/b6-like_sf"/>
</dbReference>
<dbReference type="InterPro" id="IPR048259">
    <property type="entry name" value="Cytochrome_b_N_euk/bac"/>
</dbReference>
<dbReference type="InterPro" id="IPR016174">
    <property type="entry name" value="Di-haem_cyt_TM"/>
</dbReference>
<dbReference type="NCBIfam" id="NF002990">
    <property type="entry name" value="PRK03735.1"/>
    <property type="match status" value="1"/>
</dbReference>
<dbReference type="PANTHER" id="PTHR19271">
    <property type="entry name" value="CYTOCHROME B"/>
    <property type="match status" value="1"/>
</dbReference>
<dbReference type="PANTHER" id="PTHR19271:SF16">
    <property type="entry name" value="CYTOCHROME B"/>
    <property type="match status" value="1"/>
</dbReference>
<dbReference type="Pfam" id="PF00033">
    <property type="entry name" value="Cytochrome_B"/>
    <property type="match status" value="1"/>
</dbReference>
<dbReference type="PIRSF" id="PIRSF000032">
    <property type="entry name" value="Cytochrome_b6"/>
    <property type="match status" value="1"/>
</dbReference>
<dbReference type="SUPFAM" id="SSF81342">
    <property type="entry name" value="Transmembrane di-heme cytochromes"/>
    <property type="match status" value="1"/>
</dbReference>
<dbReference type="PROSITE" id="PS51002">
    <property type="entry name" value="CYTB_NTER"/>
    <property type="match status" value="1"/>
</dbReference>
<comment type="function">
    <text evidence="1">Component of the cytochrome b6-f complex, which mediates electron transfer between photosystem II (PSII) and photosystem I (PSI), cyclic electron flow around PSI, and state transitions.</text>
</comment>
<comment type="cofactor">
    <cofactor evidence="1">
        <name>heme b</name>
        <dbReference type="ChEBI" id="CHEBI:60344"/>
    </cofactor>
    <text evidence="1">Binds 2 heme b groups non-covalently with two histidine residues as axial ligands.</text>
</comment>
<comment type="cofactor">
    <cofactor evidence="1">
        <name>heme c</name>
        <dbReference type="ChEBI" id="CHEBI:61717"/>
    </cofactor>
    <text evidence="1">Binds one heme group covalently by a single cysteine link with no axial amino acid ligand. This heme was named heme ci.</text>
</comment>
<comment type="subunit">
    <text evidence="1">The 4 large subunits of the cytochrome b6-f complex are cytochrome b6, subunit IV (17 kDa polypeptide, PetD), cytochrome f and the Rieske protein, while the 4 small subunits are PetG, PetL, PetM and PetN. The complex functions as a dimer.</text>
</comment>
<comment type="subcellular location">
    <subcellularLocation>
        <location evidence="1">Plastid</location>
        <location evidence="1">Chloroplast thylakoid membrane</location>
        <topology evidence="1">Multi-pass membrane protein</topology>
    </subcellularLocation>
</comment>
<comment type="miscellaneous">
    <text evidence="1">Heme 1 (or BH or b566) is high-potential and absorbs at about 566 nm, and heme 2 (or BL or b562) is low-potential and absorbs at about 562 nm.</text>
</comment>
<comment type="similarity">
    <text evidence="1">Belongs to the cytochrome b family. PetB subfamily.</text>
</comment>
<gene>
    <name evidence="1" type="primary">petB</name>
</gene>
<name>CYB6_HELAN</name>
<organism>
    <name type="scientific">Helianthus annuus</name>
    <name type="common">Common sunflower</name>
    <dbReference type="NCBI Taxonomy" id="4232"/>
    <lineage>
        <taxon>Eukaryota</taxon>
        <taxon>Viridiplantae</taxon>
        <taxon>Streptophyta</taxon>
        <taxon>Embryophyta</taxon>
        <taxon>Tracheophyta</taxon>
        <taxon>Spermatophyta</taxon>
        <taxon>Magnoliopsida</taxon>
        <taxon>eudicotyledons</taxon>
        <taxon>Gunneridae</taxon>
        <taxon>Pentapetalae</taxon>
        <taxon>asterids</taxon>
        <taxon>campanulids</taxon>
        <taxon>Asterales</taxon>
        <taxon>Asteraceae</taxon>
        <taxon>Asteroideae</taxon>
        <taxon>Heliantheae alliance</taxon>
        <taxon>Heliantheae</taxon>
        <taxon>Helianthus</taxon>
    </lineage>
</organism>
<accession>Q1KXS9</accession>